<feature type="chain" id="PRO_0000127803" description="Cytidine monophosphate-N-acetylneuraminic acid hydroxylase">
    <location>
        <begin position="1" status="less than"/>
        <end position="600"/>
    </location>
</feature>
<feature type="domain" description="Rieske" evidence="3">
    <location>
        <begin position="9"/>
        <end position="107"/>
    </location>
</feature>
<feature type="binding site" evidence="3">
    <location>
        <position position="49"/>
    </location>
    <ligand>
        <name>[2Fe-2S] cluster</name>
        <dbReference type="ChEBI" id="CHEBI:190135"/>
    </ligand>
</feature>
<feature type="binding site" evidence="3">
    <location>
        <position position="51"/>
    </location>
    <ligand>
        <name>[2Fe-2S] cluster</name>
        <dbReference type="ChEBI" id="CHEBI:190135"/>
    </ligand>
</feature>
<feature type="binding site" evidence="3">
    <location>
        <position position="70"/>
    </location>
    <ligand>
        <name>[2Fe-2S] cluster</name>
        <dbReference type="ChEBI" id="CHEBI:190135"/>
    </ligand>
</feature>
<feature type="binding site" evidence="3">
    <location>
        <position position="73"/>
    </location>
    <ligand>
        <name>[2Fe-2S] cluster</name>
        <dbReference type="ChEBI" id="CHEBI:190135"/>
    </ligand>
</feature>
<feature type="non-terminal residue">
    <location>
        <position position="1"/>
    </location>
</feature>
<accession>Q8MJD0</accession>
<sequence>QTTEILLCLSPVEVASLKEGINFFRNKSTGKDYILYKNKSRLRACKNMCKHQGGLFIKDIEDLAGRSVRCTKHNWKLDVSTMKYINPPESFCQDELVVEMDENNRLLLLELNPPNPWDLQPRSPEELAFGEVQITYLTHACMDLKLGDKRMVFDPWLIGPAFARGWWLLHEPPSDWLERLCQADLIYISHLHSDHLSYPTLKKLAGRRPDIPIYVGNTERPVFWNLNQSGVQLTNINVVPFGIWQQVDKNLRFMILMDGVHPEMDTCIIVEYKGHKILNTVDCTRPNGGRLPMKVALMMSDFAGGASGFPMTFSGGKFTEEWKAQFIKTERKKLLNYKARLVKNLQPRIYCPFAGYFVESHPSDKYIKETNTKNDPNELNNLIKKNSDVITWTPRPGATLDLGRMLKDPTDSKGIIEPPEGTKIYKDSWDFEPYLEILNAAVGDEIFLHSSWIKEYFTWAGFKDYNLVVRMIETDEDFNPFPGGYDYLVDFLDLSFPKERPQREHPYEEIHSRVDVIRHVVKNGLLWDELYIGFQTRLQRDPDIYHHLFWNHFQIKLPLTPPNWKSFLMCCEQNGPGILQFSTERTNEPNRNKFSVENKA</sequence>
<comment type="function">
    <text evidence="2">Sialic acids are components of carbohydrate chains of glycoconjugates and are involved in cell-cell recognition and cell-pathogen interactions. Catalyzes the conversion of CMP-N-acetylneuraminic acid (CMP-Neu5Ac) into its hydroxylated derivative CMP-N-glycolylneuraminic acid (CMP-Neu5Gc), a sialic acid abundantly expressed at the surface of many cells.</text>
</comment>
<comment type="catalytic activity">
    <reaction>
        <text>CMP-N-acetyl-beta-neuraminate + 2 Fe(II)-[cytochrome b5] + O2 + 2 H(+) = CMP-N-glycoloyl-beta-neuraminate + 2 Fe(III)-[cytochrome b5] + H2O</text>
        <dbReference type="Rhea" id="RHEA:16145"/>
        <dbReference type="Rhea" id="RHEA-COMP:10438"/>
        <dbReference type="Rhea" id="RHEA-COMP:10439"/>
        <dbReference type="ChEBI" id="CHEBI:15377"/>
        <dbReference type="ChEBI" id="CHEBI:15378"/>
        <dbReference type="ChEBI" id="CHEBI:15379"/>
        <dbReference type="ChEBI" id="CHEBI:29033"/>
        <dbReference type="ChEBI" id="CHEBI:29034"/>
        <dbReference type="ChEBI" id="CHEBI:57812"/>
        <dbReference type="ChEBI" id="CHEBI:58376"/>
        <dbReference type="EC" id="1.14.18.2"/>
    </reaction>
</comment>
<comment type="cofactor">
    <cofactor evidence="3">
        <name>[2Fe-2S] cluster</name>
        <dbReference type="ChEBI" id="CHEBI:190135"/>
    </cofactor>
    <text evidence="3">Binds 1 [2Fe-2S] cluster per subunit.</text>
</comment>
<comment type="pathway">
    <text>Amino-sugar metabolism; N-acetylneuraminate metabolism.</text>
</comment>
<comment type="subcellular location">
    <subcellularLocation>
        <location evidence="1">Cytoplasm</location>
    </subcellularLocation>
</comment>
<comment type="similarity">
    <text evidence="4">Belongs to the CMP-Neu5Ac hydroxylase family.</text>
</comment>
<evidence type="ECO:0000250" key="1"/>
<evidence type="ECO:0000250" key="2">
    <source>
        <dbReference type="UniProtKB" id="Q61419"/>
    </source>
</evidence>
<evidence type="ECO:0000255" key="3">
    <source>
        <dbReference type="PROSITE-ProRule" id="PRU00628"/>
    </source>
</evidence>
<evidence type="ECO:0000305" key="4"/>
<organism>
    <name type="scientific">Pan paniscus</name>
    <name type="common">Pygmy chimpanzee</name>
    <name type="synonym">Bonobo</name>
    <dbReference type="NCBI Taxonomy" id="9597"/>
    <lineage>
        <taxon>Eukaryota</taxon>
        <taxon>Metazoa</taxon>
        <taxon>Chordata</taxon>
        <taxon>Craniata</taxon>
        <taxon>Vertebrata</taxon>
        <taxon>Euteleostomi</taxon>
        <taxon>Mammalia</taxon>
        <taxon>Eutheria</taxon>
        <taxon>Euarchontoglires</taxon>
        <taxon>Primates</taxon>
        <taxon>Haplorrhini</taxon>
        <taxon>Catarrhini</taxon>
        <taxon>Hominidae</taxon>
        <taxon>Pan</taxon>
    </lineage>
</organism>
<name>CMAH_PANPA</name>
<proteinExistence type="evidence at transcript level"/>
<reference key="1">
    <citation type="journal article" date="2002" name="Proc. Natl. Acad. Sci. U.S.A.">
        <title>Inactivation of CMP-N-acetylneuraminic acid hydroxylase occurred prior to brain expansion during human evolution.</title>
        <authorList>
            <person name="Chou H.-H."/>
            <person name="Hayakawa T."/>
            <person name="Diaz S."/>
            <person name="Krings M."/>
            <person name="Indriati E."/>
            <person name="Leakey M."/>
            <person name="Paabo S."/>
            <person name="Satta Y."/>
            <person name="Takahata N."/>
            <person name="Varki A."/>
        </authorList>
    </citation>
    <scope>NUCLEOTIDE SEQUENCE [MRNA]</scope>
</reference>
<dbReference type="EC" id="1.14.18.2"/>
<dbReference type="EMBL" id="AF494221">
    <property type="protein sequence ID" value="AAN05316.1"/>
    <property type="molecule type" value="mRNA"/>
</dbReference>
<dbReference type="STRING" id="9597.ENSPPAP00000024035"/>
<dbReference type="eggNOG" id="ENOG502QR0M">
    <property type="taxonomic scope" value="Eukaryota"/>
</dbReference>
<dbReference type="UniPathway" id="UPA00628"/>
<dbReference type="Proteomes" id="UP000240080">
    <property type="component" value="Unplaced"/>
</dbReference>
<dbReference type="GO" id="GO:0005737">
    <property type="term" value="C:cytoplasm"/>
    <property type="evidence" value="ECO:0007669"/>
    <property type="project" value="UniProtKB-SubCell"/>
</dbReference>
<dbReference type="GO" id="GO:0051537">
    <property type="term" value="F:2 iron, 2 sulfur cluster binding"/>
    <property type="evidence" value="ECO:0007669"/>
    <property type="project" value="UniProtKB-KW"/>
</dbReference>
<dbReference type="GO" id="GO:0030338">
    <property type="term" value="F:CMP-N-acetylneuraminate monooxygenase activity"/>
    <property type="evidence" value="ECO:0007669"/>
    <property type="project" value="UniProtKB-EC"/>
</dbReference>
<dbReference type="GO" id="GO:0046872">
    <property type="term" value="F:metal ion binding"/>
    <property type="evidence" value="ECO:0007669"/>
    <property type="project" value="UniProtKB-KW"/>
</dbReference>
<dbReference type="GO" id="GO:0046381">
    <property type="term" value="P:CMP-N-acetylneuraminate metabolic process"/>
    <property type="evidence" value="ECO:0007669"/>
    <property type="project" value="TreeGrafter"/>
</dbReference>
<dbReference type="GO" id="GO:0006054">
    <property type="term" value="P:N-acetylneuraminate metabolic process"/>
    <property type="evidence" value="ECO:0007669"/>
    <property type="project" value="UniProtKB-UniPathway"/>
</dbReference>
<dbReference type="CDD" id="cd03473">
    <property type="entry name" value="Rieske_CMP_Neu5Ac_hydrolase_N"/>
    <property type="match status" value="1"/>
</dbReference>
<dbReference type="FunFam" id="3.60.15.10:FF:000025">
    <property type="entry name" value="Inactive cytidine monophosphate-N-acetylneuraminic acid hydroxylase"/>
    <property type="match status" value="1"/>
</dbReference>
<dbReference type="Gene3D" id="3.60.15.10">
    <property type="entry name" value="Ribonuclease Z/Hydroxyacylglutathione hydrolase-like"/>
    <property type="match status" value="1"/>
</dbReference>
<dbReference type="Gene3D" id="2.102.10.10">
    <property type="entry name" value="Rieske [2Fe-2S] iron-sulphur domain"/>
    <property type="match status" value="1"/>
</dbReference>
<dbReference type="InterPro" id="IPR037339">
    <property type="entry name" value="CMP-Neu5Ac_hydroxylase_Rieske"/>
</dbReference>
<dbReference type="InterPro" id="IPR027033">
    <property type="entry name" value="Cnh"/>
</dbReference>
<dbReference type="InterPro" id="IPR036866">
    <property type="entry name" value="RibonucZ/Hydroxyglut_hydro"/>
</dbReference>
<dbReference type="InterPro" id="IPR017941">
    <property type="entry name" value="Rieske_2Fe-2S"/>
</dbReference>
<dbReference type="InterPro" id="IPR036922">
    <property type="entry name" value="Rieske_2Fe-2S_sf"/>
</dbReference>
<dbReference type="PANTHER" id="PTHR46522">
    <property type="entry name" value="CYTIDINE MONOPHOSPHATE-N-ACETYLNEURAMINIC ACID HYDROXYLASE"/>
    <property type="match status" value="1"/>
</dbReference>
<dbReference type="PANTHER" id="PTHR46522:SF1">
    <property type="entry name" value="INACTIVE CYTIDINE MONOPHOSPHATE-N-ACETYLNEURAMINIC ACID HYDROXYLASE"/>
    <property type="match status" value="1"/>
</dbReference>
<dbReference type="Pfam" id="PF13483">
    <property type="entry name" value="Lactamase_B_3"/>
    <property type="match status" value="1"/>
</dbReference>
<dbReference type="Pfam" id="PF00355">
    <property type="entry name" value="Rieske"/>
    <property type="match status" value="1"/>
</dbReference>
<dbReference type="SUPFAM" id="SSF50022">
    <property type="entry name" value="ISP domain"/>
    <property type="match status" value="1"/>
</dbReference>
<dbReference type="SUPFAM" id="SSF56281">
    <property type="entry name" value="Metallo-hydrolase/oxidoreductase"/>
    <property type="match status" value="1"/>
</dbReference>
<dbReference type="PROSITE" id="PS51296">
    <property type="entry name" value="RIESKE"/>
    <property type="match status" value="1"/>
</dbReference>
<gene>
    <name type="primary">CMAH</name>
</gene>
<keyword id="KW-0001">2Fe-2S</keyword>
<keyword id="KW-0963">Cytoplasm</keyword>
<keyword id="KW-0249">Electron transport</keyword>
<keyword id="KW-0408">Iron</keyword>
<keyword id="KW-0411">Iron-sulfur</keyword>
<keyword id="KW-0479">Metal-binding</keyword>
<keyword id="KW-0560">Oxidoreductase</keyword>
<keyword id="KW-1185">Reference proteome</keyword>
<keyword id="KW-0813">Transport</keyword>
<protein>
    <recommendedName>
        <fullName>Cytidine monophosphate-N-acetylneuraminic acid hydroxylase</fullName>
        <shortName>CMP-N-acetylneuraminic acid hydroxylase</shortName>
        <ecNumber>1.14.18.2</ecNumber>
    </recommendedName>
    <alternativeName>
        <fullName>CMP-N-acetylneuraminate monooxygenase</fullName>
    </alternativeName>
    <alternativeName>
        <fullName>CMP-Neu5Ac hydroxylase</fullName>
    </alternativeName>
    <alternativeName>
        <fullName>CMP-NeuAc hydroxylase</fullName>
    </alternativeName>
</protein>